<feature type="chain" id="PRO_0000137756" description="Argininosuccinate lyase">
    <location>
        <begin position="1"/>
        <end position="455"/>
    </location>
</feature>
<proteinExistence type="inferred from homology"/>
<keyword id="KW-0028">Amino-acid biosynthesis</keyword>
<keyword id="KW-0055">Arginine biosynthesis</keyword>
<keyword id="KW-0963">Cytoplasm</keyword>
<keyword id="KW-0456">Lyase</keyword>
<keyword id="KW-1185">Reference proteome</keyword>
<reference key="1">
    <citation type="journal article" date="2001" name="Proc. Natl. Acad. Sci. U.S.A.">
        <title>Complete genome sequence of Caulobacter crescentus.</title>
        <authorList>
            <person name="Nierman W.C."/>
            <person name="Feldblyum T.V."/>
            <person name="Laub M.T."/>
            <person name="Paulsen I.T."/>
            <person name="Nelson K.E."/>
            <person name="Eisen J.A."/>
            <person name="Heidelberg J.F."/>
            <person name="Alley M.R.K."/>
            <person name="Ohta N."/>
            <person name="Maddock J.R."/>
            <person name="Potocka I."/>
            <person name="Nelson W.C."/>
            <person name="Newton A."/>
            <person name="Stephens C."/>
            <person name="Phadke N.D."/>
            <person name="Ely B."/>
            <person name="DeBoy R.T."/>
            <person name="Dodson R.J."/>
            <person name="Durkin A.S."/>
            <person name="Gwinn M.L."/>
            <person name="Haft D.H."/>
            <person name="Kolonay J.F."/>
            <person name="Smit J."/>
            <person name="Craven M.B."/>
            <person name="Khouri H.M."/>
            <person name="Shetty J."/>
            <person name="Berry K.J."/>
            <person name="Utterback T.R."/>
            <person name="Tran K."/>
            <person name="Wolf A.M."/>
            <person name="Vamathevan J.J."/>
            <person name="Ermolaeva M.D."/>
            <person name="White O."/>
            <person name="Salzberg S.L."/>
            <person name="Venter J.C."/>
            <person name="Shapiro L."/>
            <person name="Fraser C.M."/>
        </authorList>
    </citation>
    <scope>NUCLEOTIDE SEQUENCE [LARGE SCALE GENOMIC DNA]</scope>
    <source>
        <strain>ATCC 19089 / CIP 103742 / CB 15</strain>
    </source>
</reference>
<protein>
    <recommendedName>
        <fullName evidence="1">Argininosuccinate lyase</fullName>
        <shortName evidence="1">ASAL</shortName>
        <ecNumber evidence="1">4.3.2.1</ecNumber>
    </recommendedName>
    <alternativeName>
        <fullName evidence="1">Arginosuccinase</fullName>
    </alternativeName>
</protein>
<evidence type="ECO:0000255" key="1">
    <source>
        <dbReference type="HAMAP-Rule" id="MF_00006"/>
    </source>
</evidence>
<evidence type="ECO:0000305" key="2"/>
<accession>Q9A683</accession>
<comment type="catalytic activity">
    <reaction evidence="1">
        <text>2-(N(omega)-L-arginino)succinate = fumarate + L-arginine</text>
        <dbReference type="Rhea" id="RHEA:24020"/>
        <dbReference type="ChEBI" id="CHEBI:29806"/>
        <dbReference type="ChEBI" id="CHEBI:32682"/>
        <dbReference type="ChEBI" id="CHEBI:57472"/>
        <dbReference type="EC" id="4.3.2.1"/>
    </reaction>
</comment>
<comment type="pathway">
    <text evidence="1">Amino-acid biosynthesis; L-arginine biosynthesis; L-arginine from L-ornithine and carbamoyl phosphate: step 3/3.</text>
</comment>
<comment type="subcellular location">
    <subcellularLocation>
        <location evidence="1">Cytoplasm</location>
    </subcellularLocation>
</comment>
<comment type="similarity">
    <text evidence="1">Belongs to the lyase 1 family. Argininosuccinate lyase subfamily.</text>
</comment>
<comment type="sequence caution" evidence="2">
    <conflict type="erroneous initiation">
        <sequence resource="EMBL-CDS" id="AAK24182"/>
    </conflict>
</comment>
<organism>
    <name type="scientific">Caulobacter vibrioides (strain ATCC 19089 / CIP 103742 / CB 15)</name>
    <name type="common">Caulobacter crescentus</name>
    <dbReference type="NCBI Taxonomy" id="190650"/>
    <lineage>
        <taxon>Bacteria</taxon>
        <taxon>Pseudomonadati</taxon>
        <taxon>Pseudomonadota</taxon>
        <taxon>Alphaproteobacteria</taxon>
        <taxon>Caulobacterales</taxon>
        <taxon>Caulobacteraceae</taxon>
        <taxon>Caulobacter</taxon>
    </lineage>
</organism>
<sequence>MWGGRFSAKPAELMQAINVSIGFDKRLWAQDLAGSRAHARMLMNQGVIASHDGEEILEGLARVEDELLSGTFPFRDEYEDIHMNIEARLRELIGPTAGRLHTARSRNDQVAVDFRLWVRDACDRTVGQLEALQKALLTQAEAHAESLMPGFTHLQPAQPVTFGHHLMAYVEMFGRDAGRFRDARARMNECPLGAAALAGSPFPIDRQQTASALGFDRPTANSLDSVSSRDFALEALSAASITATHLSRLAEEIVLWTTPMFGFIKLTDAFTTGSSIMPQKKNPDAAELIRAKVGRILGSLTTLTVVMKGLPLAYSKDMQEDKVPTFEAFDALELSLLAMAGMIADLTPNTENMAKAAGAGFSTATDLADWLVRTLNMPFRDAHHVTGSAVKTAEGLGVDLADLSLAQFQAIEPQITKEVYAVLTPAASAASRMSYGGTAPAQVRAQIARWKELLA</sequence>
<gene>
    <name evidence="1" type="primary">argH</name>
    <name type="ordered locus">CC_2211</name>
</gene>
<name>ARLY_CAUVC</name>
<dbReference type="EC" id="4.3.2.1" evidence="1"/>
<dbReference type="EMBL" id="AE005673">
    <property type="protein sequence ID" value="AAK24182.1"/>
    <property type="status" value="ALT_INIT"/>
    <property type="molecule type" value="Genomic_DNA"/>
</dbReference>
<dbReference type="PIR" id="B87523">
    <property type="entry name" value="B87523"/>
</dbReference>
<dbReference type="RefSeq" id="NP_421014.1">
    <property type="nucleotide sequence ID" value="NC_002696.2"/>
</dbReference>
<dbReference type="SMR" id="Q9A683"/>
<dbReference type="STRING" id="190650.CC_2211"/>
<dbReference type="EnsemblBacteria" id="AAK24182">
    <property type="protein sequence ID" value="AAK24182"/>
    <property type="gene ID" value="CC_2211"/>
</dbReference>
<dbReference type="KEGG" id="ccr:CC_2211"/>
<dbReference type="PATRIC" id="fig|190650.5.peg.2228"/>
<dbReference type="eggNOG" id="COG0165">
    <property type="taxonomic scope" value="Bacteria"/>
</dbReference>
<dbReference type="HOGENOM" id="CLU_027272_2_3_5"/>
<dbReference type="UniPathway" id="UPA00068">
    <property type="reaction ID" value="UER00114"/>
</dbReference>
<dbReference type="Proteomes" id="UP000001816">
    <property type="component" value="Chromosome"/>
</dbReference>
<dbReference type="GO" id="GO:0005829">
    <property type="term" value="C:cytosol"/>
    <property type="evidence" value="ECO:0007669"/>
    <property type="project" value="TreeGrafter"/>
</dbReference>
<dbReference type="GO" id="GO:0004056">
    <property type="term" value="F:argininosuccinate lyase activity"/>
    <property type="evidence" value="ECO:0007669"/>
    <property type="project" value="UniProtKB-UniRule"/>
</dbReference>
<dbReference type="GO" id="GO:0042450">
    <property type="term" value="P:arginine biosynthetic process via ornithine"/>
    <property type="evidence" value="ECO:0007669"/>
    <property type="project" value="InterPro"/>
</dbReference>
<dbReference type="GO" id="GO:0006526">
    <property type="term" value="P:L-arginine biosynthetic process"/>
    <property type="evidence" value="ECO:0007669"/>
    <property type="project" value="UniProtKB-UniRule"/>
</dbReference>
<dbReference type="CDD" id="cd01359">
    <property type="entry name" value="Argininosuccinate_lyase"/>
    <property type="match status" value="1"/>
</dbReference>
<dbReference type="FunFam" id="1.10.275.10:FF:000002">
    <property type="entry name" value="Argininosuccinate lyase"/>
    <property type="match status" value="1"/>
</dbReference>
<dbReference type="FunFam" id="1.10.40.30:FF:000001">
    <property type="entry name" value="Argininosuccinate lyase"/>
    <property type="match status" value="1"/>
</dbReference>
<dbReference type="FunFam" id="1.20.200.10:FF:000015">
    <property type="entry name" value="argininosuccinate lyase isoform X2"/>
    <property type="match status" value="1"/>
</dbReference>
<dbReference type="Gene3D" id="1.10.40.30">
    <property type="entry name" value="Fumarase/aspartase (C-terminal domain)"/>
    <property type="match status" value="1"/>
</dbReference>
<dbReference type="Gene3D" id="1.20.200.10">
    <property type="entry name" value="Fumarase/aspartase (Central domain)"/>
    <property type="match status" value="1"/>
</dbReference>
<dbReference type="Gene3D" id="1.10.275.10">
    <property type="entry name" value="Fumarase/aspartase (N-terminal domain)"/>
    <property type="match status" value="1"/>
</dbReference>
<dbReference type="HAMAP" id="MF_00006">
    <property type="entry name" value="Arg_succ_lyase"/>
    <property type="match status" value="1"/>
</dbReference>
<dbReference type="InterPro" id="IPR029419">
    <property type="entry name" value="Arg_succ_lyase_C"/>
</dbReference>
<dbReference type="InterPro" id="IPR009049">
    <property type="entry name" value="Argininosuccinate_lyase"/>
</dbReference>
<dbReference type="InterPro" id="IPR024083">
    <property type="entry name" value="Fumarase/histidase_N"/>
</dbReference>
<dbReference type="InterPro" id="IPR020557">
    <property type="entry name" value="Fumarate_lyase_CS"/>
</dbReference>
<dbReference type="InterPro" id="IPR000362">
    <property type="entry name" value="Fumarate_lyase_fam"/>
</dbReference>
<dbReference type="InterPro" id="IPR022761">
    <property type="entry name" value="Fumarate_lyase_N"/>
</dbReference>
<dbReference type="InterPro" id="IPR008948">
    <property type="entry name" value="L-Aspartase-like"/>
</dbReference>
<dbReference type="NCBIfam" id="TIGR00838">
    <property type="entry name" value="argH"/>
    <property type="match status" value="1"/>
</dbReference>
<dbReference type="PANTHER" id="PTHR43814">
    <property type="entry name" value="ARGININOSUCCINATE LYASE"/>
    <property type="match status" value="1"/>
</dbReference>
<dbReference type="PANTHER" id="PTHR43814:SF1">
    <property type="entry name" value="ARGININOSUCCINATE LYASE"/>
    <property type="match status" value="1"/>
</dbReference>
<dbReference type="Pfam" id="PF14698">
    <property type="entry name" value="ASL_C2"/>
    <property type="match status" value="1"/>
</dbReference>
<dbReference type="Pfam" id="PF00206">
    <property type="entry name" value="Lyase_1"/>
    <property type="match status" value="1"/>
</dbReference>
<dbReference type="PRINTS" id="PR00145">
    <property type="entry name" value="ARGSUCLYASE"/>
</dbReference>
<dbReference type="PRINTS" id="PR00149">
    <property type="entry name" value="FUMRATELYASE"/>
</dbReference>
<dbReference type="SUPFAM" id="SSF48557">
    <property type="entry name" value="L-aspartase-like"/>
    <property type="match status" value="1"/>
</dbReference>
<dbReference type="PROSITE" id="PS00163">
    <property type="entry name" value="FUMARATE_LYASES"/>
    <property type="match status" value="1"/>
</dbReference>